<name>DDMA1_STEMA</name>
<organism evidence="11">
    <name type="scientific">Stenotrophomonas maltophilia</name>
    <name type="common">Pseudomonas maltophilia</name>
    <name type="synonym">Xanthomonas maltophilia</name>
    <dbReference type="NCBI Taxonomy" id="40324"/>
    <lineage>
        <taxon>Bacteria</taxon>
        <taxon>Pseudomonadati</taxon>
        <taxon>Pseudomonadota</taxon>
        <taxon>Gammaproteobacteria</taxon>
        <taxon>Lysobacterales</taxon>
        <taxon>Lysobacteraceae</taxon>
        <taxon>Stenotrophomonas</taxon>
        <taxon>Stenotrophomonas maltophilia group</taxon>
    </lineage>
</organism>
<keyword id="KW-0903">Direct protein sequencing</keyword>
<keyword id="KW-0274">FAD</keyword>
<keyword id="KW-0285">Flavoprotein</keyword>
<keyword id="KW-0520">NAD</keyword>
<keyword id="KW-0560">Oxidoreductase</keyword>
<dbReference type="EC" id="1.18.1.3" evidence="8 9 10"/>
<dbReference type="EMBL" id="AY786444">
    <property type="protein sequence ID" value="AAV53700.1"/>
    <property type="molecule type" value="Genomic_DNA"/>
</dbReference>
<dbReference type="SMR" id="Q5S3I2"/>
<dbReference type="GO" id="GO:0005737">
    <property type="term" value="C:cytoplasm"/>
    <property type="evidence" value="ECO:0007669"/>
    <property type="project" value="TreeGrafter"/>
</dbReference>
<dbReference type="GO" id="GO:0008860">
    <property type="term" value="F:ferredoxin-NAD+ reductase activity"/>
    <property type="evidence" value="ECO:0007669"/>
    <property type="project" value="UniProtKB-EC"/>
</dbReference>
<dbReference type="GO" id="GO:0016651">
    <property type="term" value="F:oxidoreductase activity, acting on NAD(P)H"/>
    <property type="evidence" value="ECO:0007669"/>
    <property type="project" value="TreeGrafter"/>
</dbReference>
<dbReference type="Gene3D" id="3.30.390.30">
    <property type="match status" value="1"/>
</dbReference>
<dbReference type="Gene3D" id="3.50.50.60">
    <property type="entry name" value="FAD/NAD(P)-binding domain"/>
    <property type="match status" value="2"/>
</dbReference>
<dbReference type="InterPro" id="IPR050446">
    <property type="entry name" value="FAD-oxidoreductase/Apoptosis"/>
</dbReference>
<dbReference type="InterPro" id="IPR036188">
    <property type="entry name" value="FAD/NAD-bd_sf"/>
</dbReference>
<dbReference type="InterPro" id="IPR023753">
    <property type="entry name" value="FAD/NAD-binding_dom"/>
</dbReference>
<dbReference type="InterPro" id="IPR016156">
    <property type="entry name" value="FAD/NAD-linked_Rdtase_dimer_sf"/>
</dbReference>
<dbReference type="InterPro" id="IPR028202">
    <property type="entry name" value="Reductase_C"/>
</dbReference>
<dbReference type="PANTHER" id="PTHR43557">
    <property type="entry name" value="APOPTOSIS-INDUCING FACTOR 1"/>
    <property type="match status" value="1"/>
</dbReference>
<dbReference type="PANTHER" id="PTHR43557:SF2">
    <property type="entry name" value="RIESKE DOMAIN-CONTAINING PROTEIN-RELATED"/>
    <property type="match status" value="1"/>
</dbReference>
<dbReference type="Pfam" id="PF07992">
    <property type="entry name" value="Pyr_redox_2"/>
    <property type="match status" value="1"/>
</dbReference>
<dbReference type="Pfam" id="PF14759">
    <property type="entry name" value="Reductase_C"/>
    <property type="match status" value="1"/>
</dbReference>
<dbReference type="PRINTS" id="PR00368">
    <property type="entry name" value="FADPNR"/>
</dbReference>
<dbReference type="PRINTS" id="PR00411">
    <property type="entry name" value="PNDRDTASEI"/>
</dbReference>
<dbReference type="SUPFAM" id="SSF51905">
    <property type="entry name" value="FAD/NAD(P)-binding domain"/>
    <property type="match status" value="1"/>
</dbReference>
<dbReference type="SUPFAM" id="SSF55424">
    <property type="entry name" value="FAD/NAD-linked reductases, dimerisation (C-terminal) domain"/>
    <property type="match status" value="1"/>
</dbReference>
<accession>Q5S3I2</accession>
<gene>
    <name evidence="5" type="primary">ddmA1</name>
</gene>
<protein>
    <recommendedName>
        <fullName evidence="6">Dicamba O-demethylase 1, ferredoxin reductase component</fullName>
    </recommendedName>
    <alternativeName>
        <fullName evidence="6">Ferredoxin--NAD(+) reductase</fullName>
        <ecNumber evidence="8 9 10">1.18.1.3</ecNumber>
    </alternativeName>
</protein>
<comment type="function">
    <text evidence="2 3 4">Component of the dicamba O-demethylase multicomponent enzyme system involved in the degradation of the herbicide dicamba (PubMed:15820213, PubMed:15855162, PubMed:16535584). In vitro, catalyzes the transfers of electrons from ferredoxin (DdmB) to NADH (PubMed:15820213, PubMed:15855162, PubMed:16535584). Both NADH and NADPH support enzyme activity, with NADH being markedly more effective than NADPH (PubMed:15820213, PubMed:16535584).</text>
</comment>
<comment type="catalytic activity">
    <reaction evidence="8 9 10">
        <text>2 reduced [2Fe-2S]-[ferredoxin] + NAD(+) + H(+) = 2 oxidized [2Fe-2S]-[ferredoxin] + NADH</text>
        <dbReference type="Rhea" id="RHEA:16521"/>
        <dbReference type="Rhea" id="RHEA-COMP:10000"/>
        <dbReference type="Rhea" id="RHEA-COMP:10001"/>
        <dbReference type="ChEBI" id="CHEBI:15378"/>
        <dbReference type="ChEBI" id="CHEBI:33737"/>
        <dbReference type="ChEBI" id="CHEBI:33738"/>
        <dbReference type="ChEBI" id="CHEBI:57540"/>
        <dbReference type="ChEBI" id="CHEBI:57945"/>
        <dbReference type="EC" id="1.18.1.3"/>
    </reaction>
</comment>
<comment type="cofactor">
    <cofactor evidence="8">
        <name>FAD</name>
        <dbReference type="ChEBI" id="CHEBI:57692"/>
    </cofactor>
</comment>
<comment type="subunit">
    <text evidence="2 3 4">Monomer (PubMed:15820213). The dicamba O-demethylase multicomponent enzyme system is composed of an oxygenase component (DdmC) and an electron transfer component formed by a ferredoxin reductase (DdmA1) and a ferredoxin (DdmB) (PubMed:15820213, PubMed:15855162, PubMed:16535584). In vitro, dicamba O-demethylase assays in which DdmA2 is substituted for DdmA1 demonstrate that the two enzymes possess nearly identical activities (PubMed:15855162).</text>
</comment>
<comment type="similarity">
    <text evidence="7">Belongs to the FAD-dependent oxidoreductase family.</text>
</comment>
<reference key="1">
    <citation type="journal article" date="2005" name="J. Biol. Chem.">
        <title>A three-component dicamba O-demethylase from Pseudomonas maltophilia, strain DI-6: gene isolation, characterization, and heterologous expression.</title>
        <authorList>
            <person name="Herman P.L."/>
            <person name="Behrens M."/>
            <person name="Chakraborty S."/>
            <person name="Chrastil B.M."/>
            <person name="Barycki J."/>
            <person name="Weeks D.P."/>
        </authorList>
    </citation>
    <scope>NUCLEOTIDE SEQUENCE [GENOMIC DNA]</scope>
    <scope>FUNCTION</scope>
    <scope>CATALYTIC ACTIVITY</scope>
    <scope>SUBUNIT</scope>
    <source>
        <strain evidence="11">DI-6</strain>
    </source>
</reference>
<reference key="2">
    <citation type="journal article" date="2005" name="Arch. Biochem. Biophys.">
        <title>A three-component dicamba O-demethylase from Pseudomonas maltophilia, strain DI-6: purification and characterization.</title>
        <authorList>
            <person name="Chakraborty S."/>
            <person name="Behrens M."/>
            <person name="Herman P.L."/>
            <person name="Arendsen A.F."/>
            <person name="Hagen W.R."/>
            <person name="Carlson D.L."/>
            <person name="Wang X.Z."/>
            <person name="Weeks D.P."/>
        </authorList>
    </citation>
    <scope>PROTEIN SEQUENCE OF 2-25</scope>
    <scope>FUNCTION</scope>
    <scope>CATALYTIC ACTIVITY</scope>
    <scope>COFACTOR</scope>
    <scope>SUBUNIT</scope>
    <source>
        <strain>DI-6</strain>
    </source>
</reference>
<reference key="3">
    <citation type="journal article" date="1997" name="Appl. Environ. Microbiol.">
        <title>A three-component enzyme system catalyzes the O-demethylation of the herbicide dicamba in Pseudomonas maltophilia DI-6.</title>
        <authorList>
            <person name="Wang X."/>
            <person name="Li B."/>
            <person name="Herman P.L."/>
            <person name="Weeks D.P."/>
        </authorList>
    </citation>
    <scope>FUNCTION</scope>
    <scope>CATALYTIC ACTIVITY</scope>
    <scope>SUBUNIT</scope>
    <source>
        <strain>DI-6</strain>
    </source>
</reference>
<proteinExistence type="evidence at protein level"/>
<feature type="initiator methionine" description="Removed" evidence="2">
    <location>
        <position position="1"/>
    </location>
</feature>
<feature type="chain" id="PRO_0000445256" description="Dicamba O-demethylase 1, ferredoxin reductase component">
    <location>
        <begin position="2"/>
        <end position="408"/>
    </location>
</feature>
<feature type="binding site" evidence="1">
    <location>
        <position position="14"/>
    </location>
    <ligand>
        <name>FAD</name>
        <dbReference type="ChEBI" id="CHEBI:57692"/>
    </ligand>
</feature>
<feature type="binding site" evidence="1">
    <location>
        <position position="49"/>
    </location>
    <ligand>
        <name>FAD</name>
        <dbReference type="ChEBI" id="CHEBI:57692"/>
    </ligand>
</feature>
<feature type="binding site" evidence="1">
    <location>
        <position position="82"/>
    </location>
    <ligand>
        <name>FAD</name>
        <dbReference type="ChEBI" id="CHEBI:57692"/>
    </ligand>
</feature>
<feature type="binding site" evidence="1">
    <location>
        <position position="130"/>
    </location>
    <ligand>
        <name>FAD</name>
        <dbReference type="ChEBI" id="CHEBI:57692"/>
    </ligand>
</feature>
<feature type="binding site" evidence="1">
    <location>
        <position position="279"/>
    </location>
    <ligand>
        <name>FAD</name>
        <dbReference type="ChEBI" id="CHEBI:57692"/>
    </ligand>
</feature>
<feature type="binding site" evidence="1">
    <location>
        <position position="298"/>
    </location>
    <ligand>
        <name>FAD</name>
        <dbReference type="ChEBI" id="CHEBI:57692"/>
    </ligand>
</feature>
<sequence>MSKADVVIVGAGHGGAQCAIALRQNGFEGTITVIGREPEYPYERPPLSKEYFAREKTFDRLYIRPPTFWAEKNIEFKLGTEVTKVDPKAHELTLSNGESYGYGKLVWATGGDPRRLSCQGADLTGIHAVRTREDCDTLMAEVDAGTKNIVVIGGGYIGLEAAAVLSKMGLKVTLLEALPRVLARVAGEDLSTFYQKEHVDHGVDLRTEVMVDSLVGENGKVTGVQLAGGEVIPAEGVIVGIGIVPAVGPLIAAGAAGANGVDVDEYCRTSLPDIYAIGDCAAFACDYAGGNVMRVESVQNANDMGTCVAKAICGDEKPYKAFPWFWSNQYDLKLQTAGINLGFDKTVIRGNPEERSFSVVYLKDGRVVALDCVNMVKDYVQGRKLVEAGATPDLEALADAGKPLKELL</sequence>
<evidence type="ECO:0000250" key="1">
    <source>
        <dbReference type="UniProtKB" id="P16640"/>
    </source>
</evidence>
<evidence type="ECO:0000269" key="2">
    <source>
    </source>
</evidence>
<evidence type="ECO:0000269" key="3">
    <source>
    </source>
</evidence>
<evidence type="ECO:0000269" key="4">
    <source>
    </source>
</evidence>
<evidence type="ECO:0000303" key="5">
    <source>
    </source>
</evidence>
<evidence type="ECO:0000303" key="6">
    <source>
    </source>
</evidence>
<evidence type="ECO:0000305" key="7"/>
<evidence type="ECO:0000305" key="8">
    <source>
    </source>
</evidence>
<evidence type="ECO:0000305" key="9">
    <source>
    </source>
</evidence>
<evidence type="ECO:0000305" key="10">
    <source>
    </source>
</evidence>
<evidence type="ECO:0000312" key="11">
    <source>
        <dbReference type="EMBL" id="AAV53700.1"/>
    </source>
</evidence>